<dbReference type="EMBL" id="DAAA02058916">
    <property type="status" value="NOT_ANNOTATED_CDS"/>
    <property type="molecule type" value="Genomic_DNA"/>
</dbReference>
<dbReference type="EMBL" id="AAFC03054038">
    <property type="status" value="NOT_ANNOTATED_CDS"/>
    <property type="molecule type" value="Genomic_DNA"/>
</dbReference>
<dbReference type="EMBL" id="AAFC03054039">
    <property type="status" value="NOT_ANNOTATED_CDS"/>
    <property type="molecule type" value="Genomic_DNA"/>
</dbReference>
<dbReference type="EMBL" id="BC149532">
    <property type="protein sequence ID" value="AAI49533.1"/>
    <property type="molecule type" value="mRNA"/>
</dbReference>
<dbReference type="RefSeq" id="NP_001095627.1">
    <property type="nucleotide sequence ID" value="NM_001102157.2"/>
</dbReference>
<dbReference type="RefSeq" id="XP_005225615.1">
    <molecule id="E1BP36-1"/>
    <property type="nucleotide sequence ID" value="XM_005225558.5"/>
</dbReference>
<dbReference type="SMR" id="E1BP36"/>
<dbReference type="FunCoup" id="E1BP36">
    <property type="interactions" value="5126"/>
</dbReference>
<dbReference type="STRING" id="9913.ENSBTAP00000053458"/>
<dbReference type="PaxDb" id="9913-ENSBTAP00000053458"/>
<dbReference type="Ensembl" id="ENSBTAT00000061179.4">
    <molecule id="E1BP36-1"/>
    <property type="protein sequence ID" value="ENSBTAP00000053458.3"/>
    <property type="gene ID" value="ENSBTAG00000012704.8"/>
</dbReference>
<dbReference type="GeneID" id="533499"/>
<dbReference type="KEGG" id="bta:533499"/>
<dbReference type="CTD" id="64210"/>
<dbReference type="VEuPathDB" id="HostDB:ENSBTAG00000012704"/>
<dbReference type="eggNOG" id="KOG1967">
    <property type="taxonomic scope" value="Eukaryota"/>
</dbReference>
<dbReference type="GeneTree" id="ENSGT00390000015583"/>
<dbReference type="HOGENOM" id="CLU_005943_2_0_1"/>
<dbReference type="InParanoid" id="E1BP36"/>
<dbReference type="OMA" id="FSFMPEF"/>
<dbReference type="OrthoDB" id="342900at2759"/>
<dbReference type="Proteomes" id="UP000009136">
    <property type="component" value="Chromosome 26"/>
</dbReference>
<dbReference type="Bgee" id="ENSBTAG00000012704">
    <property type="expression patterns" value="Expressed in biceps femoris and 107 other cell types or tissues"/>
</dbReference>
<dbReference type="GO" id="GO:0005737">
    <property type="term" value="C:cytoplasm"/>
    <property type="evidence" value="ECO:0000250"/>
    <property type="project" value="UniProtKB"/>
</dbReference>
<dbReference type="GO" id="GO:0097361">
    <property type="term" value="C:cytosolic [4Fe-4S] assembly targeting complex"/>
    <property type="evidence" value="ECO:0000250"/>
    <property type="project" value="UniProtKB"/>
</dbReference>
<dbReference type="GO" id="GO:0071817">
    <property type="term" value="C:MMXD complex"/>
    <property type="evidence" value="ECO:0000318"/>
    <property type="project" value="GO_Central"/>
</dbReference>
<dbReference type="GO" id="GO:0005654">
    <property type="term" value="C:nucleoplasm"/>
    <property type="evidence" value="ECO:0007669"/>
    <property type="project" value="Ensembl"/>
</dbReference>
<dbReference type="GO" id="GO:0019899">
    <property type="term" value="F:enzyme binding"/>
    <property type="evidence" value="ECO:0007669"/>
    <property type="project" value="Ensembl"/>
</dbReference>
<dbReference type="GO" id="GO:0030331">
    <property type="term" value="F:nuclear estrogen receptor binding"/>
    <property type="evidence" value="ECO:0007669"/>
    <property type="project" value="Ensembl"/>
</dbReference>
<dbReference type="GO" id="GO:0003713">
    <property type="term" value="F:transcription coactivator activity"/>
    <property type="evidence" value="ECO:0007669"/>
    <property type="project" value="Ensembl"/>
</dbReference>
<dbReference type="GO" id="GO:0007059">
    <property type="term" value="P:chromosome segregation"/>
    <property type="evidence" value="ECO:0007669"/>
    <property type="project" value="UniProtKB-KW"/>
</dbReference>
<dbReference type="GO" id="GO:0006281">
    <property type="term" value="P:DNA repair"/>
    <property type="evidence" value="ECO:0007669"/>
    <property type="project" value="UniProtKB-KW"/>
</dbReference>
<dbReference type="GO" id="GO:0051604">
    <property type="term" value="P:protein maturation"/>
    <property type="evidence" value="ECO:0000250"/>
    <property type="project" value="UniProtKB"/>
</dbReference>
<dbReference type="FunFam" id="1.25.10.10:FF:000114">
    <property type="entry name" value="MMS19 nucleotide excision repair protein homolog isoform X2"/>
    <property type="match status" value="1"/>
</dbReference>
<dbReference type="Gene3D" id="1.25.10.10">
    <property type="entry name" value="Leucine-rich Repeat Variant"/>
    <property type="match status" value="2"/>
</dbReference>
<dbReference type="InterPro" id="IPR011989">
    <property type="entry name" value="ARM-like"/>
</dbReference>
<dbReference type="InterPro" id="IPR016024">
    <property type="entry name" value="ARM-type_fold"/>
</dbReference>
<dbReference type="InterPro" id="IPR039920">
    <property type="entry name" value="MMS19"/>
</dbReference>
<dbReference type="InterPro" id="IPR024687">
    <property type="entry name" value="MMS19_C"/>
</dbReference>
<dbReference type="InterPro" id="IPR029240">
    <property type="entry name" value="MMS19_N"/>
</dbReference>
<dbReference type="PANTHER" id="PTHR12891">
    <property type="entry name" value="DNA REPAIR/TRANSCRIPTION PROTEIN MET18/MMS19"/>
    <property type="match status" value="1"/>
</dbReference>
<dbReference type="PANTHER" id="PTHR12891:SF0">
    <property type="entry name" value="MMS19 NUCLEOTIDE EXCISION REPAIR PROTEIN HOMOLOG"/>
    <property type="match status" value="1"/>
</dbReference>
<dbReference type="Pfam" id="PF12460">
    <property type="entry name" value="MMS19_C"/>
    <property type="match status" value="1"/>
</dbReference>
<dbReference type="Pfam" id="PF14500">
    <property type="entry name" value="MMS19_N"/>
    <property type="match status" value="1"/>
</dbReference>
<dbReference type="SUPFAM" id="SSF48371">
    <property type="entry name" value="ARM repeat"/>
    <property type="match status" value="1"/>
</dbReference>
<reference key="1">
    <citation type="journal article" date="2009" name="Genome Biol.">
        <title>A whole-genome assembly of the domestic cow, Bos taurus.</title>
        <authorList>
            <person name="Zimin A.V."/>
            <person name="Delcher A.L."/>
            <person name="Florea L."/>
            <person name="Kelley D.R."/>
            <person name="Schatz M.C."/>
            <person name="Puiu D."/>
            <person name="Hanrahan F."/>
            <person name="Pertea G."/>
            <person name="Van Tassell C.P."/>
            <person name="Sonstegard T.S."/>
            <person name="Marcais G."/>
            <person name="Roberts M."/>
            <person name="Subramanian P."/>
            <person name="Yorke J.A."/>
            <person name="Salzberg S.L."/>
        </authorList>
    </citation>
    <scope>NUCLEOTIDE SEQUENCE [LARGE SCALE GENOMIC DNA]</scope>
    <source>
        <strain>Hereford</strain>
    </source>
</reference>
<reference key="2">
    <citation type="journal article" date="2009" name="Science">
        <title>The genome sequence of taurine cattle: a window to ruminant biology and evolution.</title>
        <authorList>
            <consortium name="The bovine genome sequencing and analysis consortium"/>
        </authorList>
    </citation>
    <scope>NUCLEOTIDE SEQUENCE [LARGE SCALE GENOMIC DNA]</scope>
    <source>
        <strain>Hereford</strain>
    </source>
</reference>
<reference key="3">
    <citation type="submission" date="2007-07" db="EMBL/GenBank/DDBJ databases">
        <authorList>
            <consortium name="NIH - Mammalian Gene Collection (MGC) project"/>
        </authorList>
    </citation>
    <scope>NUCLEOTIDE SEQUENCE [LARGE SCALE MRNA] (ISOFORM 2)</scope>
    <source>
        <strain>Crossbred X Angus</strain>
        <tissue>Ileum</tissue>
    </source>
</reference>
<comment type="function">
    <text evidence="1">Key component of the cytosolic iron-sulfur protein assembly (CIA) complex, a multiprotein complex that mediates the incorporation of iron-sulfur cluster into apoproteins specifically involved in DNA metabolism and genomic integrity. In the CIA complex, MMS19 acts as an adapter between early-acting CIA components and a subset of cellular target Fe/S proteins such as ERCC2/XPD, FANCJ and RTEL1, thereby playing a key role in nucleotide excision repair (NER), homologous recombination-mediated double-strand break DNA repair, DNA replication and RNA polymerase II (POL II) transcription. As a CIA complex component and in collaboration with CIAO1 and CIAO2, binds to and facilitates the assembly of most cytosolic-nuclear Fe/S proteins. As part of the mitotic spindle-associated MMXD complex, plays a role in chromosome segregation, probably by facilitating iron-sulfur cluster assembly into ERCC2/XPD. Together with CIAO2, facilitates the transfer of Fe-S clusters to the motor protein KIF4A, which ensures proper localization of KIF4A to mitotic machinery components to promote the progression of mitosis. Indirectly acts as a transcriptional coactivator of estrogen receptor (ER), via its role in iron-sulfur insertion into some component of the TFIIH-machinery.</text>
</comment>
<comment type="subunit">
    <text evidence="1">Component of the CIA complex. In the CIA complex, interacts directly with CIAO2B and CIAO3. Component of the MMXD complex, composed of CIAO1, ERCC2, CIAO2B, MMS19 and SLC25A5. Interacts with CIAO2B; the interaction is direct. Interacts with ERCC2/XPD; the interaction is direct. Interacts with ERCC3/XPB and NCOA3/RAC3. Interacts with RTEL1; the interaction mediates the association of RTEL1 with the CIA complex. Interacts with BRIP1. Interacts with KIF4A; the interaction facilitates the transfer of Fe-S clusters to KIF4A to ensure proper localization of KIF4A to the mitotic machinery components. Interacts with CCDC117; the interaction is indirect (By similarity).</text>
</comment>
<comment type="subcellular location">
    <subcellularLocation>
        <location evidence="1">Nucleus</location>
    </subcellularLocation>
    <subcellularLocation>
        <location evidence="1">Cytoplasm</location>
        <location evidence="1">Cytoskeleton</location>
        <location evidence="1">Spindle</location>
    </subcellularLocation>
</comment>
<comment type="alternative products">
    <event type="alternative splicing"/>
    <isoform>
        <id>E1BP36-1</id>
        <name>1</name>
        <sequence type="displayed"/>
    </isoform>
    <isoform>
        <id>E1BP36-2</id>
        <name>2</name>
        <sequence type="described" ref="VSP_044195 VSP_044196"/>
    </isoform>
</comment>
<comment type="PTM">
    <text evidence="1">Ubiquitinated; undergoes 'Lys-48'-linked polyubiquitination.</text>
</comment>
<comment type="similarity">
    <text evidence="3">Belongs to the MET18/MMS19 family.</text>
</comment>
<name>MMS19_BOVIN</name>
<keyword id="KW-0007">Acetylation</keyword>
<keyword id="KW-0010">Activator</keyword>
<keyword id="KW-0025">Alternative splicing</keyword>
<keyword id="KW-0159">Chromosome partition</keyword>
<keyword id="KW-0963">Cytoplasm</keyword>
<keyword id="KW-0206">Cytoskeleton</keyword>
<keyword id="KW-0227">DNA damage</keyword>
<keyword id="KW-0234">DNA repair</keyword>
<keyword id="KW-0539">Nucleus</keyword>
<keyword id="KW-0597">Phosphoprotein</keyword>
<keyword id="KW-1185">Reference proteome</keyword>
<keyword id="KW-0677">Repeat</keyword>
<keyword id="KW-0804">Transcription</keyword>
<keyword id="KW-0805">Transcription regulation</keyword>
<keyword id="KW-0832">Ubl conjugation</keyword>
<feature type="initiator methionine" description="Removed" evidence="1">
    <location>
        <position position="1"/>
    </location>
</feature>
<feature type="chain" id="PRO_0000419480" description="MMS19 nucleotide excision repair protein homolog">
    <location>
        <begin position="2"/>
        <end position="1030"/>
    </location>
</feature>
<feature type="repeat" description="HEAT 1">
    <location>
        <begin position="866"/>
        <end position="904"/>
    </location>
</feature>
<feature type="repeat" description="HEAT 2">
    <location>
        <begin position="908"/>
        <end position="946"/>
    </location>
</feature>
<feature type="repeat" description="HEAT 3">
    <location>
        <begin position="949"/>
        <end position="987"/>
    </location>
</feature>
<feature type="repeat" description="HEAT 4">
    <location>
        <begin position="990"/>
        <end position="1028"/>
    </location>
</feature>
<feature type="modified residue" description="N-acetylalanine" evidence="1">
    <location>
        <position position="2"/>
    </location>
</feature>
<feature type="modified residue" description="Phosphoserine" evidence="1">
    <location>
        <position position="1027"/>
    </location>
</feature>
<feature type="splice variant" id="VSP_044195" description="In isoform 2." evidence="2">
    <original>CR</original>
    <variation>W</variation>
    <location>
        <begin position="502"/>
        <end position="503"/>
    </location>
</feature>
<feature type="splice variant" id="VSP_044196" description="In isoform 2." evidence="2">
    <original>EIPQLNRLMGELLELSCCQSCPFSSTAAAKCFAGLLNKHPAGQQLDEFLQLAVDKVEAGLSSGPCRSQAFTLLLWVTKALVLRYHPLSSCLTERLMGLLSDPELGPAAADGFSLLMSDCTDVLTRAGHAEVRIMFRQRFFTDNVPALVRGFHAAPQDVKPNYLKGLSHVLNRLPKPVLLPELPTLLSLLLEALSCPDSVVQLSTLSCLQPLLLEAPQVMSLHVDTLITKFLNLSASPSMAVRIAALQCMHALTRLPTPVLLPYKPQVIRALAKPLDDKKRLVRKEAVSARGEWFLLGSPGS</original>
    <variation>FYRWKSHS</variation>
    <location>
        <begin position="730"/>
        <end position="1030"/>
    </location>
</feature>
<feature type="sequence conflict" description="In Ref. 3; AAI49533." evidence="3" ref="3">
    <original>K</original>
    <variation>E</variation>
    <location>
        <position position="426"/>
    </location>
</feature>
<sequence>MAAAAALEAVAPLGTLWGLVQDFVMGQQEGPADQVAADVKSGSYTVLQVVEALGSSLENPEPRTRARGIQLLSQVLLQCHSLLLEKEVVHLILFYENRLKDHHLVIPSVLQGLRALSLCVTLPPGLAVSVLKAIFQEVHVQSLPQVDRHTVYSIITNFMRAREEELKGLGADFTFGFIQVMDGEKDPRNLLVAFHIVYDLISRDYSLGPFVEELFEVTSCYFPIDFTPPPNDPHGIQREDLILSLRAVLASTPRFAEFLLPLLIEKVDSEILSAKLDSLQTLNACCAVYGQKELKDFLPSLWASIRREVFQTASERVEAEGLAALNSLTACLSRSVLRADAEDLLDSFLSNILQDCRHHLCEPDMKLVWPSAKLLQAAAGASARACDHVTSNVLPLLLEQFHKHSQSNQRRTILEMILGFLKLQQKWSYEDKDERPLSGFKDQLCSLMFMALTDPNTQLQLVGIRTLTVLGAQPDLLSSGDLELAVGHLYRLSFLEEDSQSCRVAALEASGTLATLYPMAFSSHLVPRLAEDLCTEESDLARADGPTRCSRHPRCLQALSAISTHPSIVKETLPLLLQHLCQMNRGSVSPGTSEVIAVCQSLQQVAENCQRDPESCWYFHQTAVPCLLALVVQASAPEKEHSVLKKVLLEDEVLATMASVIATATTHLSPDLASQSVAHIVPLFLDGNISFLPENSFSGRFQPFQDGSSGQRRLVALLMAFVCSLPRNVEIPQLNRLMGELLELSCCQSCPFSSTAAAKCFAGLLNKHPAGQQLDEFLQLAVDKVEAGLSSGPCRSQAFTLLLWVTKALVLRYHPLSSCLTERLMGLLSDPELGPAAADGFSLLMSDCTDVLTRAGHAEVRIMFRQRFFTDNVPALVRGFHAAPQDVKPNYLKGLSHVLNRLPKPVLLPELPTLLSLLLEALSCPDSVVQLSTLSCLQPLLLEAPQVMSLHVDTLITKFLNLSASPSMAVRIAALQCMHALTRLPTPVLLPYKPQVIRALAKPLDDKKRLVRKEAVSARGEWFLLGSPGS</sequence>
<protein>
    <recommendedName>
        <fullName evidence="1">MMS19 nucleotide excision repair protein homolog</fullName>
    </recommendedName>
    <alternativeName>
        <fullName>MMS19-like protein</fullName>
    </alternativeName>
</protein>
<evidence type="ECO:0000250" key="1">
    <source>
        <dbReference type="UniProtKB" id="Q96T76"/>
    </source>
</evidence>
<evidence type="ECO:0000303" key="2">
    <source ref="3"/>
</evidence>
<evidence type="ECO:0000305" key="3"/>
<accession>E1BP36</accession>
<accession>A6QPX1</accession>
<accession>F1MUW1</accession>
<gene>
    <name evidence="1" type="primary">MMS19</name>
</gene>
<proteinExistence type="evidence at transcript level"/>
<organism>
    <name type="scientific">Bos taurus</name>
    <name type="common">Bovine</name>
    <dbReference type="NCBI Taxonomy" id="9913"/>
    <lineage>
        <taxon>Eukaryota</taxon>
        <taxon>Metazoa</taxon>
        <taxon>Chordata</taxon>
        <taxon>Craniata</taxon>
        <taxon>Vertebrata</taxon>
        <taxon>Euteleostomi</taxon>
        <taxon>Mammalia</taxon>
        <taxon>Eutheria</taxon>
        <taxon>Laurasiatheria</taxon>
        <taxon>Artiodactyla</taxon>
        <taxon>Ruminantia</taxon>
        <taxon>Pecora</taxon>
        <taxon>Bovidae</taxon>
        <taxon>Bovinae</taxon>
        <taxon>Bos</taxon>
    </lineage>
</organism>